<sequence length="255" mass="27371">MINFPQHPRQTLELAGFLPEASGRAVEWLISDSQVPYSEAVAAMDSRAAAIAAGDANELVWLLEHPPLYTSGTSGQAADLLDPRFPLHATGRGGQLTYHGPGQRVAYVMLDLKRRRPDVRAYVAALEQWIIATLEAFNVRGERREDRVGVWVARPDKGVGHEDKIAAIGVRLKRWVSLHGIAINVEPDLGHFAAIVPCGISDPRYGVTSLVDLGLPVTMTDVDLALRASFTTIFGATVNASGSEPAAGSVNSSSV</sequence>
<organism>
    <name type="scientific">Rhodopseudomonas palustris (strain BisB5)</name>
    <dbReference type="NCBI Taxonomy" id="316057"/>
    <lineage>
        <taxon>Bacteria</taxon>
        <taxon>Pseudomonadati</taxon>
        <taxon>Pseudomonadota</taxon>
        <taxon>Alphaproteobacteria</taxon>
        <taxon>Hyphomicrobiales</taxon>
        <taxon>Nitrobacteraceae</taxon>
        <taxon>Rhodopseudomonas</taxon>
    </lineage>
</organism>
<dbReference type="EC" id="2.3.1.181" evidence="1"/>
<dbReference type="EMBL" id="CP000283">
    <property type="protein sequence ID" value="ABE40309.1"/>
    <property type="molecule type" value="Genomic_DNA"/>
</dbReference>
<dbReference type="SMR" id="Q135D0"/>
<dbReference type="STRING" id="316057.RPD_3083"/>
<dbReference type="KEGG" id="rpd:RPD_3083"/>
<dbReference type="eggNOG" id="COG0321">
    <property type="taxonomic scope" value="Bacteria"/>
</dbReference>
<dbReference type="HOGENOM" id="CLU_035168_3_0_5"/>
<dbReference type="BioCyc" id="RPAL316057:RPD_RS15485-MONOMER"/>
<dbReference type="UniPathway" id="UPA00538">
    <property type="reaction ID" value="UER00592"/>
</dbReference>
<dbReference type="Proteomes" id="UP000001818">
    <property type="component" value="Chromosome"/>
</dbReference>
<dbReference type="GO" id="GO:0005737">
    <property type="term" value="C:cytoplasm"/>
    <property type="evidence" value="ECO:0007669"/>
    <property type="project" value="UniProtKB-SubCell"/>
</dbReference>
<dbReference type="GO" id="GO:0033819">
    <property type="term" value="F:lipoyl(octanoyl) transferase activity"/>
    <property type="evidence" value="ECO:0007669"/>
    <property type="project" value="UniProtKB-EC"/>
</dbReference>
<dbReference type="GO" id="GO:0036211">
    <property type="term" value="P:protein modification process"/>
    <property type="evidence" value="ECO:0007669"/>
    <property type="project" value="InterPro"/>
</dbReference>
<dbReference type="CDD" id="cd16444">
    <property type="entry name" value="LipB"/>
    <property type="match status" value="1"/>
</dbReference>
<dbReference type="FunFam" id="3.30.930.10:FF:000159">
    <property type="entry name" value="Octanoyltransferase"/>
    <property type="match status" value="1"/>
</dbReference>
<dbReference type="Gene3D" id="3.30.930.10">
    <property type="entry name" value="Bira Bifunctional Protein, Domain 2"/>
    <property type="match status" value="1"/>
</dbReference>
<dbReference type="HAMAP" id="MF_00013">
    <property type="entry name" value="LipB"/>
    <property type="match status" value="1"/>
</dbReference>
<dbReference type="InterPro" id="IPR045864">
    <property type="entry name" value="aa-tRNA-synth_II/BPL/LPL"/>
</dbReference>
<dbReference type="InterPro" id="IPR004143">
    <property type="entry name" value="BPL_LPL_catalytic"/>
</dbReference>
<dbReference type="InterPro" id="IPR000544">
    <property type="entry name" value="Octanoyltransferase"/>
</dbReference>
<dbReference type="InterPro" id="IPR020605">
    <property type="entry name" value="Octanoyltransferase_CS"/>
</dbReference>
<dbReference type="NCBIfam" id="TIGR00214">
    <property type="entry name" value="lipB"/>
    <property type="match status" value="1"/>
</dbReference>
<dbReference type="NCBIfam" id="NF010921">
    <property type="entry name" value="PRK14341.1"/>
    <property type="match status" value="1"/>
</dbReference>
<dbReference type="NCBIfam" id="NF010925">
    <property type="entry name" value="PRK14345.1"/>
    <property type="match status" value="1"/>
</dbReference>
<dbReference type="PANTHER" id="PTHR10993:SF7">
    <property type="entry name" value="LIPOYLTRANSFERASE 2, MITOCHONDRIAL-RELATED"/>
    <property type="match status" value="1"/>
</dbReference>
<dbReference type="PANTHER" id="PTHR10993">
    <property type="entry name" value="OCTANOYLTRANSFERASE"/>
    <property type="match status" value="1"/>
</dbReference>
<dbReference type="Pfam" id="PF21948">
    <property type="entry name" value="LplA-B_cat"/>
    <property type="match status" value="1"/>
</dbReference>
<dbReference type="PIRSF" id="PIRSF016262">
    <property type="entry name" value="LPLase"/>
    <property type="match status" value="1"/>
</dbReference>
<dbReference type="SUPFAM" id="SSF55681">
    <property type="entry name" value="Class II aaRS and biotin synthetases"/>
    <property type="match status" value="1"/>
</dbReference>
<dbReference type="PROSITE" id="PS51733">
    <property type="entry name" value="BPL_LPL_CATALYTIC"/>
    <property type="match status" value="1"/>
</dbReference>
<dbReference type="PROSITE" id="PS01313">
    <property type="entry name" value="LIPB"/>
    <property type="match status" value="1"/>
</dbReference>
<feature type="chain" id="PRO_1000001120" description="Octanoyltransferase">
    <location>
        <begin position="1"/>
        <end position="255"/>
    </location>
</feature>
<feature type="domain" description="BPL/LPL catalytic" evidence="2">
    <location>
        <begin position="54"/>
        <end position="238"/>
    </location>
</feature>
<feature type="active site" description="Acyl-thioester intermediate" evidence="1">
    <location>
        <position position="198"/>
    </location>
</feature>
<feature type="binding site" evidence="1">
    <location>
        <begin position="92"/>
        <end position="99"/>
    </location>
    <ligand>
        <name>substrate</name>
    </ligand>
</feature>
<feature type="binding site" evidence="1">
    <location>
        <begin position="167"/>
        <end position="169"/>
    </location>
    <ligand>
        <name>substrate</name>
    </ligand>
</feature>
<feature type="binding site" evidence="1">
    <location>
        <begin position="180"/>
        <end position="182"/>
    </location>
    <ligand>
        <name>substrate</name>
    </ligand>
</feature>
<feature type="site" description="Lowers pKa of active site Cys" evidence="1">
    <location>
        <position position="164"/>
    </location>
</feature>
<name>LIPB_RHOPS</name>
<accession>Q135D0</accession>
<reference key="1">
    <citation type="submission" date="2006-03" db="EMBL/GenBank/DDBJ databases">
        <title>Complete sequence of Rhodopseudomonas palustris BisB5.</title>
        <authorList>
            <consortium name="US DOE Joint Genome Institute"/>
            <person name="Copeland A."/>
            <person name="Lucas S."/>
            <person name="Lapidus A."/>
            <person name="Barry K."/>
            <person name="Detter J.C."/>
            <person name="Glavina del Rio T."/>
            <person name="Hammon N."/>
            <person name="Israni S."/>
            <person name="Dalin E."/>
            <person name="Tice H."/>
            <person name="Pitluck S."/>
            <person name="Chain P."/>
            <person name="Malfatti S."/>
            <person name="Shin M."/>
            <person name="Vergez L."/>
            <person name="Schmutz J."/>
            <person name="Larimer F."/>
            <person name="Land M."/>
            <person name="Hauser L."/>
            <person name="Pelletier D.A."/>
            <person name="Kyrpides N."/>
            <person name="Lykidis A."/>
            <person name="Oda Y."/>
            <person name="Harwood C.S."/>
            <person name="Richardson P."/>
        </authorList>
    </citation>
    <scope>NUCLEOTIDE SEQUENCE [LARGE SCALE GENOMIC DNA]</scope>
    <source>
        <strain>BisB5</strain>
    </source>
</reference>
<keyword id="KW-0012">Acyltransferase</keyword>
<keyword id="KW-0963">Cytoplasm</keyword>
<keyword id="KW-0808">Transferase</keyword>
<comment type="function">
    <text evidence="1">Catalyzes the transfer of endogenously produced octanoic acid from octanoyl-acyl-carrier-protein onto the lipoyl domains of lipoate-dependent enzymes. Lipoyl-ACP can also act as a substrate although octanoyl-ACP is likely to be the physiological substrate.</text>
</comment>
<comment type="catalytic activity">
    <reaction evidence="1">
        <text>octanoyl-[ACP] + L-lysyl-[protein] = N(6)-octanoyl-L-lysyl-[protein] + holo-[ACP] + H(+)</text>
        <dbReference type="Rhea" id="RHEA:17665"/>
        <dbReference type="Rhea" id="RHEA-COMP:9636"/>
        <dbReference type="Rhea" id="RHEA-COMP:9685"/>
        <dbReference type="Rhea" id="RHEA-COMP:9752"/>
        <dbReference type="Rhea" id="RHEA-COMP:9928"/>
        <dbReference type="ChEBI" id="CHEBI:15378"/>
        <dbReference type="ChEBI" id="CHEBI:29969"/>
        <dbReference type="ChEBI" id="CHEBI:64479"/>
        <dbReference type="ChEBI" id="CHEBI:78463"/>
        <dbReference type="ChEBI" id="CHEBI:78809"/>
        <dbReference type="EC" id="2.3.1.181"/>
    </reaction>
</comment>
<comment type="pathway">
    <text evidence="1">Protein modification; protein lipoylation via endogenous pathway; protein N(6)-(lipoyl)lysine from octanoyl-[acyl-carrier-protein]: step 1/2.</text>
</comment>
<comment type="subcellular location">
    <subcellularLocation>
        <location evidence="1">Cytoplasm</location>
    </subcellularLocation>
</comment>
<comment type="miscellaneous">
    <text evidence="1">In the reaction, the free carboxyl group of octanoic acid is attached via an amide linkage to the epsilon-amino group of a specific lysine residue of lipoyl domains of lipoate-dependent enzymes.</text>
</comment>
<comment type="similarity">
    <text evidence="1">Belongs to the LipB family.</text>
</comment>
<gene>
    <name evidence="1" type="primary">lipB</name>
    <name type="ordered locus">RPD_3083</name>
</gene>
<proteinExistence type="inferred from homology"/>
<evidence type="ECO:0000255" key="1">
    <source>
        <dbReference type="HAMAP-Rule" id="MF_00013"/>
    </source>
</evidence>
<evidence type="ECO:0000255" key="2">
    <source>
        <dbReference type="PROSITE-ProRule" id="PRU01067"/>
    </source>
</evidence>
<protein>
    <recommendedName>
        <fullName evidence="1">Octanoyltransferase</fullName>
        <ecNumber evidence="1">2.3.1.181</ecNumber>
    </recommendedName>
    <alternativeName>
        <fullName evidence="1">Lipoate-protein ligase B</fullName>
    </alternativeName>
    <alternativeName>
        <fullName evidence="1">Lipoyl/octanoyl transferase</fullName>
    </alternativeName>
    <alternativeName>
        <fullName evidence="1">Octanoyl-[acyl-carrier-protein]-protein N-octanoyltransferase</fullName>
    </alternativeName>
</protein>